<proteinExistence type="inferred from homology"/>
<keyword id="KW-0131">Cell cycle</keyword>
<keyword id="KW-0132">Cell division</keyword>
<keyword id="KW-0997">Cell inner membrane</keyword>
<keyword id="KW-1003">Cell membrane</keyword>
<keyword id="KW-0133">Cell shape</keyword>
<keyword id="KW-0961">Cell wall biogenesis/degradation</keyword>
<keyword id="KW-0328">Glycosyltransferase</keyword>
<keyword id="KW-0472">Membrane</keyword>
<keyword id="KW-0573">Peptidoglycan synthesis</keyword>
<keyword id="KW-0808">Transferase</keyword>
<gene>
    <name evidence="1" type="primary">murG</name>
    <name type="ordered locus">RPA3530</name>
</gene>
<accession>Q6N411</accession>
<organism>
    <name type="scientific">Rhodopseudomonas palustris (strain ATCC BAA-98 / CGA009)</name>
    <dbReference type="NCBI Taxonomy" id="258594"/>
    <lineage>
        <taxon>Bacteria</taxon>
        <taxon>Pseudomonadati</taxon>
        <taxon>Pseudomonadota</taxon>
        <taxon>Alphaproteobacteria</taxon>
        <taxon>Hyphomicrobiales</taxon>
        <taxon>Nitrobacteraceae</taxon>
        <taxon>Rhodopseudomonas</taxon>
    </lineage>
</organism>
<protein>
    <recommendedName>
        <fullName evidence="1">UDP-N-acetylglucosamine--N-acetylmuramyl-(pentapeptide) pyrophosphoryl-undecaprenol N-acetylglucosamine transferase</fullName>
        <ecNumber evidence="1">2.4.1.227</ecNumber>
    </recommendedName>
    <alternativeName>
        <fullName evidence="1">Undecaprenyl-PP-MurNAc-pentapeptide-UDPGlcNAc GlcNAc transferase</fullName>
    </alternativeName>
</protein>
<reference key="1">
    <citation type="journal article" date="2004" name="Nat. Biotechnol.">
        <title>Complete genome sequence of the metabolically versatile photosynthetic bacterium Rhodopseudomonas palustris.</title>
        <authorList>
            <person name="Larimer F.W."/>
            <person name="Chain P."/>
            <person name="Hauser L."/>
            <person name="Lamerdin J.E."/>
            <person name="Malfatti S."/>
            <person name="Do L."/>
            <person name="Land M.L."/>
            <person name="Pelletier D.A."/>
            <person name="Beatty J.T."/>
            <person name="Lang A.S."/>
            <person name="Tabita F.R."/>
            <person name="Gibson J.L."/>
            <person name="Hanson T.E."/>
            <person name="Bobst C."/>
            <person name="Torres y Torres J.L."/>
            <person name="Peres C."/>
            <person name="Harrison F.H."/>
            <person name="Gibson J."/>
            <person name="Harwood C.S."/>
        </authorList>
    </citation>
    <scope>NUCLEOTIDE SEQUENCE [LARGE SCALE GENOMIC DNA]</scope>
    <source>
        <strain>ATCC BAA-98 / CGA009</strain>
    </source>
</reference>
<feature type="chain" id="PRO_0000225089" description="UDP-N-acetylglucosamine--N-acetylmuramyl-(pentapeptide) pyrophosphoryl-undecaprenol N-acetylglucosamine transferase">
    <location>
        <begin position="1"/>
        <end position="366"/>
    </location>
</feature>
<feature type="binding site" evidence="1">
    <location>
        <begin position="14"/>
        <end position="16"/>
    </location>
    <ligand>
        <name>UDP-N-acetyl-alpha-D-glucosamine</name>
        <dbReference type="ChEBI" id="CHEBI:57705"/>
    </ligand>
</feature>
<feature type="binding site" evidence="1">
    <location>
        <position position="125"/>
    </location>
    <ligand>
        <name>UDP-N-acetyl-alpha-D-glucosamine</name>
        <dbReference type="ChEBI" id="CHEBI:57705"/>
    </ligand>
</feature>
<feature type="binding site" evidence="1">
    <location>
        <position position="168"/>
    </location>
    <ligand>
        <name>UDP-N-acetyl-alpha-D-glucosamine</name>
        <dbReference type="ChEBI" id="CHEBI:57705"/>
    </ligand>
</feature>
<feature type="binding site" evidence="1">
    <location>
        <position position="196"/>
    </location>
    <ligand>
        <name>UDP-N-acetyl-alpha-D-glucosamine</name>
        <dbReference type="ChEBI" id="CHEBI:57705"/>
    </ligand>
</feature>
<feature type="binding site" evidence="1">
    <location>
        <position position="297"/>
    </location>
    <ligand>
        <name>UDP-N-acetyl-alpha-D-glucosamine</name>
        <dbReference type="ChEBI" id="CHEBI:57705"/>
    </ligand>
</feature>
<name>MURG_RHOPA</name>
<comment type="function">
    <text evidence="1">Cell wall formation. Catalyzes the transfer of a GlcNAc subunit on undecaprenyl-pyrophosphoryl-MurNAc-pentapeptide (lipid intermediate I) to form undecaprenyl-pyrophosphoryl-MurNAc-(pentapeptide)GlcNAc (lipid intermediate II).</text>
</comment>
<comment type="catalytic activity">
    <reaction evidence="1">
        <text>di-trans,octa-cis-undecaprenyl diphospho-N-acetyl-alpha-D-muramoyl-L-alanyl-D-glutamyl-meso-2,6-diaminopimeloyl-D-alanyl-D-alanine + UDP-N-acetyl-alpha-D-glucosamine = di-trans,octa-cis-undecaprenyl diphospho-[N-acetyl-alpha-D-glucosaminyl-(1-&gt;4)]-N-acetyl-alpha-D-muramoyl-L-alanyl-D-glutamyl-meso-2,6-diaminopimeloyl-D-alanyl-D-alanine + UDP + H(+)</text>
        <dbReference type="Rhea" id="RHEA:31227"/>
        <dbReference type="ChEBI" id="CHEBI:15378"/>
        <dbReference type="ChEBI" id="CHEBI:57705"/>
        <dbReference type="ChEBI" id="CHEBI:58223"/>
        <dbReference type="ChEBI" id="CHEBI:61387"/>
        <dbReference type="ChEBI" id="CHEBI:61388"/>
        <dbReference type="EC" id="2.4.1.227"/>
    </reaction>
</comment>
<comment type="pathway">
    <text evidence="1">Cell wall biogenesis; peptidoglycan biosynthesis.</text>
</comment>
<comment type="subcellular location">
    <subcellularLocation>
        <location evidence="1">Cell inner membrane</location>
        <topology evidence="1">Peripheral membrane protein</topology>
        <orientation evidence="1">Cytoplasmic side</orientation>
    </subcellularLocation>
</comment>
<comment type="similarity">
    <text evidence="1">Belongs to the glycosyltransferase 28 family. MurG subfamily.</text>
</comment>
<dbReference type="EC" id="2.4.1.227" evidence="1"/>
<dbReference type="EMBL" id="BX572604">
    <property type="protein sequence ID" value="CAE28971.1"/>
    <property type="molecule type" value="Genomic_DNA"/>
</dbReference>
<dbReference type="RefSeq" id="WP_011159070.1">
    <property type="nucleotide sequence ID" value="NZ_CP116810.1"/>
</dbReference>
<dbReference type="SMR" id="Q6N411"/>
<dbReference type="STRING" id="258594.RPA3530"/>
<dbReference type="CAZy" id="GT28">
    <property type="family name" value="Glycosyltransferase Family 28"/>
</dbReference>
<dbReference type="GeneID" id="66894632"/>
<dbReference type="eggNOG" id="COG0707">
    <property type="taxonomic scope" value="Bacteria"/>
</dbReference>
<dbReference type="HOGENOM" id="CLU_037404_2_1_5"/>
<dbReference type="PhylomeDB" id="Q6N411"/>
<dbReference type="UniPathway" id="UPA00219"/>
<dbReference type="GO" id="GO:0005886">
    <property type="term" value="C:plasma membrane"/>
    <property type="evidence" value="ECO:0007669"/>
    <property type="project" value="UniProtKB-SubCell"/>
</dbReference>
<dbReference type="GO" id="GO:0051991">
    <property type="term" value="F:UDP-N-acetyl-D-glucosamine:N-acetylmuramoyl-L-alanyl-D-glutamyl-meso-2,6-diaminopimelyl-D-alanyl-D-alanine-diphosphoundecaprenol 4-beta-N-acetylglucosaminlytransferase activity"/>
    <property type="evidence" value="ECO:0007669"/>
    <property type="project" value="RHEA"/>
</dbReference>
<dbReference type="GO" id="GO:0050511">
    <property type="term" value="F:undecaprenyldiphospho-muramoylpentapeptide beta-N-acetylglucosaminyltransferase activity"/>
    <property type="evidence" value="ECO:0007669"/>
    <property type="project" value="UniProtKB-UniRule"/>
</dbReference>
<dbReference type="GO" id="GO:0005975">
    <property type="term" value="P:carbohydrate metabolic process"/>
    <property type="evidence" value="ECO:0007669"/>
    <property type="project" value="InterPro"/>
</dbReference>
<dbReference type="GO" id="GO:0051301">
    <property type="term" value="P:cell division"/>
    <property type="evidence" value="ECO:0007669"/>
    <property type="project" value="UniProtKB-KW"/>
</dbReference>
<dbReference type="GO" id="GO:0071555">
    <property type="term" value="P:cell wall organization"/>
    <property type="evidence" value="ECO:0007669"/>
    <property type="project" value="UniProtKB-KW"/>
</dbReference>
<dbReference type="GO" id="GO:0030259">
    <property type="term" value="P:lipid glycosylation"/>
    <property type="evidence" value="ECO:0007669"/>
    <property type="project" value="UniProtKB-UniRule"/>
</dbReference>
<dbReference type="GO" id="GO:0009252">
    <property type="term" value="P:peptidoglycan biosynthetic process"/>
    <property type="evidence" value="ECO:0007669"/>
    <property type="project" value="UniProtKB-UniRule"/>
</dbReference>
<dbReference type="GO" id="GO:0008360">
    <property type="term" value="P:regulation of cell shape"/>
    <property type="evidence" value="ECO:0007669"/>
    <property type="project" value="UniProtKB-KW"/>
</dbReference>
<dbReference type="CDD" id="cd03785">
    <property type="entry name" value="GT28_MurG"/>
    <property type="match status" value="1"/>
</dbReference>
<dbReference type="Gene3D" id="3.40.50.2000">
    <property type="entry name" value="Glycogen Phosphorylase B"/>
    <property type="match status" value="2"/>
</dbReference>
<dbReference type="HAMAP" id="MF_00033">
    <property type="entry name" value="MurG"/>
    <property type="match status" value="1"/>
</dbReference>
<dbReference type="InterPro" id="IPR006009">
    <property type="entry name" value="GlcNAc_MurG"/>
</dbReference>
<dbReference type="InterPro" id="IPR007235">
    <property type="entry name" value="Glyco_trans_28_C"/>
</dbReference>
<dbReference type="InterPro" id="IPR004276">
    <property type="entry name" value="GlycoTrans_28_N"/>
</dbReference>
<dbReference type="NCBIfam" id="TIGR01133">
    <property type="entry name" value="murG"/>
    <property type="match status" value="1"/>
</dbReference>
<dbReference type="PANTHER" id="PTHR21015:SF22">
    <property type="entry name" value="GLYCOSYLTRANSFERASE"/>
    <property type="match status" value="1"/>
</dbReference>
<dbReference type="PANTHER" id="PTHR21015">
    <property type="entry name" value="UDP-N-ACETYLGLUCOSAMINE--N-ACETYLMURAMYL-(PENTAPEPTIDE) PYROPHOSPHORYL-UNDECAPRENOL N-ACETYLGLUCOSAMINE TRANSFERASE 1"/>
    <property type="match status" value="1"/>
</dbReference>
<dbReference type="Pfam" id="PF04101">
    <property type="entry name" value="Glyco_tran_28_C"/>
    <property type="match status" value="1"/>
</dbReference>
<dbReference type="Pfam" id="PF03033">
    <property type="entry name" value="Glyco_transf_28"/>
    <property type="match status" value="1"/>
</dbReference>
<dbReference type="SUPFAM" id="SSF53756">
    <property type="entry name" value="UDP-Glycosyltransferase/glycogen phosphorylase"/>
    <property type="match status" value="1"/>
</dbReference>
<sequence length="366" mass="38444">MTDAPLILLAAGGTGGHLFPAEALGVVLIRRGYRVRLVTDHRATRYSGLFTAEMTDVVPSETVRGRTPWALAKTALKLGSGALLAFNLIGRLKPAAVVGFGGYPTLPPLLAATWRRVPTLIHEQNAVMGRANRFLAPRVDAIATGFPGHEIAWPVLASKITNTGNPIRPAVADAATVAYDPPAAGGSLRVLVFGGSQGARVMADIVPPALEKLDPALLRRLVLTQQVRDEDMGRVRAVYDRLQLNCELAPFFTDLPQRLASSQLVVSRSGAGTVAELAAIGRPGILVPLPGALDQDQFANAGVLTAAGGALRIVQPDFTPDRLAAEITALAADPAKLTQMAAAARQIGRLDAAERLADVVGRVAKV</sequence>
<evidence type="ECO:0000255" key="1">
    <source>
        <dbReference type="HAMAP-Rule" id="MF_00033"/>
    </source>
</evidence>